<organism>
    <name type="scientific">Rhizobium etli (strain CIAT 652)</name>
    <dbReference type="NCBI Taxonomy" id="491916"/>
    <lineage>
        <taxon>Bacteria</taxon>
        <taxon>Pseudomonadati</taxon>
        <taxon>Pseudomonadota</taxon>
        <taxon>Alphaproteobacteria</taxon>
        <taxon>Hyphomicrobiales</taxon>
        <taxon>Rhizobiaceae</taxon>
        <taxon>Rhizobium/Agrobacterium group</taxon>
        <taxon>Rhizobium</taxon>
    </lineage>
</organism>
<feature type="chain" id="PRO_1000126254" description="Transaldolase">
    <location>
        <begin position="1"/>
        <end position="321"/>
    </location>
</feature>
<feature type="active site" description="Schiff-base intermediate with substrate" evidence="2">
    <location>
        <position position="132"/>
    </location>
</feature>
<dbReference type="EC" id="2.2.1.2" evidence="2"/>
<dbReference type="EMBL" id="CP001074">
    <property type="protein sequence ID" value="ACE92876.1"/>
    <property type="molecule type" value="Genomic_DNA"/>
</dbReference>
<dbReference type="SMR" id="B3Q0T5"/>
<dbReference type="KEGG" id="rec:RHECIAT_CH0003939"/>
<dbReference type="eggNOG" id="COG0176">
    <property type="taxonomic scope" value="Bacteria"/>
</dbReference>
<dbReference type="HOGENOM" id="CLU_047470_0_1_5"/>
<dbReference type="UniPathway" id="UPA00115">
    <property type="reaction ID" value="UER00414"/>
</dbReference>
<dbReference type="Proteomes" id="UP000008817">
    <property type="component" value="Chromosome"/>
</dbReference>
<dbReference type="GO" id="GO:0005829">
    <property type="term" value="C:cytosol"/>
    <property type="evidence" value="ECO:0007669"/>
    <property type="project" value="TreeGrafter"/>
</dbReference>
<dbReference type="GO" id="GO:0004801">
    <property type="term" value="F:transaldolase activity"/>
    <property type="evidence" value="ECO:0000250"/>
    <property type="project" value="UniProtKB"/>
</dbReference>
<dbReference type="GO" id="GO:0005975">
    <property type="term" value="P:carbohydrate metabolic process"/>
    <property type="evidence" value="ECO:0007669"/>
    <property type="project" value="InterPro"/>
</dbReference>
<dbReference type="GO" id="GO:0006098">
    <property type="term" value="P:pentose-phosphate shunt"/>
    <property type="evidence" value="ECO:0007669"/>
    <property type="project" value="UniProtKB-UniRule"/>
</dbReference>
<dbReference type="CDD" id="cd00957">
    <property type="entry name" value="Transaldolase_TalAB"/>
    <property type="match status" value="1"/>
</dbReference>
<dbReference type="FunFam" id="3.20.20.70:FF:000131">
    <property type="entry name" value="Transaldolase"/>
    <property type="match status" value="1"/>
</dbReference>
<dbReference type="Gene3D" id="3.20.20.70">
    <property type="entry name" value="Aldolase class I"/>
    <property type="match status" value="1"/>
</dbReference>
<dbReference type="HAMAP" id="MF_00492">
    <property type="entry name" value="Transaldolase_1"/>
    <property type="match status" value="1"/>
</dbReference>
<dbReference type="InterPro" id="IPR013785">
    <property type="entry name" value="Aldolase_TIM"/>
</dbReference>
<dbReference type="InterPro" id="IPR001585">
    <property type="entry name" value="TAL/FSA"/>
</dbReference>
<dbReference type="InterPro" id="IPR004730">
    <property type="entry name" value="Transaldolase_1"/>
</dbReference>
<dbReference type="InterPro" id="IPR018225">
    <property type="entry name" value="Transaldolase_AS"/>
</dbReference>
<dbReference type="NCBIfam" id="NF009001">
    <property type="entry name" value="PRK12346.1"/>
    <property type="match status" value="1"/>
</dbReference>
<dbReference type="NCBIfam" id="TIGR00874">
    <property type="entry name" value="talAB"/>
    <property type="match status" value="1"/>
</dbReference>
<dbReference type="PANTHER" id="PTHR10683">
    <property type="entry name" value="TRANSALDOLASE"/>
    <property type="match status" value="1"/>
</dbReference>
<dbReference type="PANTHER" id="PTHR10683:SF18">
    <property type="entry name" value="TRANSALDOLASE"/>
    <property type="match status" value="1"/>
</dbReference>
<dbReference type="Pfam" id="PF00923">
    <property type="entry name" value="TAL_FSA"/>
    <property type="match status" value="1"/>
</dbReference>
<dbReference type="SUPFAM" id="SSF51569">
    <property type="entry name" value="Aldolase"/>
    <property type="match status" value="1"/>
</dbReference>
<dbReference type="PROSITE" id="PS01054">
    <property type="entry name" value="TRANSALDOLASE_1"/>
    <property type="match status" value="1"/>
</dbReference>
<dbReference type="PROSITE" id="PS00958">
    <property type="entry name" value="TRANSALDOLASE_2"/>
    <property type="match status" value="1"/>
</dbReference>
<gene>
    <name evidence="2" type="primary">tal</name>
    <name type="ordered locus">RHECIAT_CH0003939</name>
</gene>
<proteinExistence type="inferred from homology"/>
<sequence>MTSKLDQLREITTVVADTGDIEAVARLKPVDCTTNPSIVLKALGTPMFADAIKEAVAWGKTQGGNPEAVSSAVADRLAISVGAALVKLVPGRVSTEVDADLSFDTEASLAKARSIIAAYKDRGIERDRILIKLASTWEGIRAAEVLQKEGIDCNLTLLFSKAQAIACADAKVFLISPFVGRILDWYKKSTGKDYTAEEDPGVISVRDIYNYYKANDIKTIVMGASFRNAGEIEALAGCDRLTISPALLDELAKDEGKLERKLSPESRKPDAKVSVDEKTFRWMMNEDAMATEKLAEGIRAFAKDLTTLRTMVQKELQLAAA</sequence>
<name>TAL_RHIE6</name>
<evidence type="ECO:0000250" key="1"/>
<evidence type="ECO:0000255" key="2">
    <source>
        <dbReference type="HAMAP-Rule" id="MF_00492"/>
    </source>
</evidence>
<protein>
    <recommendedName>
        <fullName evidence="2">Transaldolase</fullName>
        <ecNumber evidence="2">2.2.1.2</ecNumber>
    </recommendedName>
</protein>
<comment type="function">
    <text evidence="2">Transaldolase is important for the balance of metabolites in the pentose-phosphate pathway.</text>
</comment>
<comment type="catalytic activity">
    <reaction evidence="2">
        <text>D-sedoheptulose 7-phosphate + D-glyceraldehyde 3-phosphate = D-erythrose 4-phosphate + beta-D-fructose 6-phosphate</text>
        <dbReference type="Rhea" id="RHEA:17053"/>
        <dbReference type="ChEBI" id="CHEBI:16897"/>
        <dbReference type="ChEBI" id="CHEBI:57483"/>
        <dbReference type="ChEBI" id="CHEBI:57634"/>
        <dbReference type="ChEBI" id="CHEBI:59776"/>
        <dbReference type="EC" id="2.2.1.2"/>
    </reaction>
</comment>
<comment type="pathway">
    <text evidence="2">Carbohydrate degradation; pentose phosphate pathway; D-glyceraldehyde 3-phosphate and beta-D-fructose 6-phosphate from D-ribose 5-phosphate and D-xylulose 5-phosphate (non-oxidative stage): step 2/3.</text>
</comment>
<comment type="subunit">
    <text evidence="1">Homodimer.</text>
</comment>
<comment type="subcellular location">
    <subcellularLocation>
        <location evidence="2">Cytoplasm</location>
    </subcellularLocation>
</comment>
<comment type="similarity">
    <text evidence="2">Belongs to the transaldolase family. Type 1 subfamily.</text>
</comment>
<keyword id="KW-0963">Cytoplasm</keyword>
<keyword id="KW-0570">Pentose shunt</keyword>
<keyword id="KW-0704">Schiff base</keyword>
<keyword id="KW-0808">Transferase</keyword>
<accession>B3Q0T5</accession>
<reference key="1">
    <citation type="journal article" date="2010" name="Appl. Environ. Microbiol.">
        <title>Conserved symbiotic plasmid DNA sequences in the multireplicon pangenomic structure of Rhizobium etli.</title>
        <authorList>
            <person name="Gonzalez V."/>
            <person name="Acosta J.L."/>
            <person name="Santamaria R.I."/>
            <person name="Bustos P."/>
            <person name="Fernandez J.L."/>
            <person name="Hernandez Gonzalez I.L."/>
            <person name="Diaz R."/>
            <person name="Flores M."/>
            <person name="Palacios R."/>
            <person name="Mora J."/>
            <person name="Davila G."/>
        </authorList>
    </citation>
    <scope>NUCLEOTIDE SEQUENCE [LARGE SCALE GENOMIC DNA]</scope>
    <source>
        <strain>CIAT 652</strain>
    </source>
</reference>